<organism>
    <name type="scientific">Saccharomyces cerevisiae (strain ATCC 204508 / S288c)</name>
    <name type="common">Baker's yeast</name>
    <dbReference type="NCBI Taxonomy" id="559292"/>
    <lineage>
        <taxon>Eukaryota</taxon>
        <taxon>Fungi</taxon>
        <taxon>Dikarya</taxon>
        <taxon>Ascomycota</taxon>
        <taxon>Saccharomycotina</taxon>
        <taxon>Saccharomycetes</taxon>
        <taxon>Saccharomycetales</taxon>
        <taxon>Saccharomycetaceae</taxon>
        <taxon>Saccharomyces</taxon>
    </lineage>
</organism>
<protein>
    <recommendedName>
        <fullName evidence="4">Choline transporter</fullName>
    </recommendedName>
</protein>
<sequence>MSIRNDNASGGYMQPDQSSNASMHKRDLRVEEEIKPLDDMDSKGAVAADGEVHLRKSFSLWSILGVGFGLTNSWFGISTSMVAGISSGGPMMIVYGIIIVALISICIGTSLGELSSAYPHAGGQFWWSLKLAPPKYKRFAAYMCGSFAYAGSVFTSASTTLSVATEVVGMYALTHPEFIPKRWHIFVCFELLHLFLMFFNCYGKSLPIISSSSLYISLLSFFTITITVLACSHGKFNDAKFVFATFNNETGWKNGGIAFIVGLINPAWSFSCLDCATHMAFEVEKPERVIPIAIMGTVAIGFVTSFCYVIAMFFSIQDLDAVLSSTTGAPILDIYNQALGNKSGAIFLGCLILFTSFGCVIACHTWQARLCWSFARDNGLPLSRLWSQVNPHTGVPLNAHLMSCAWITLIGLLYLASSTAFQSLITGCIAFLLLSYIIPVICLLAKKRNIAHGPFWLGKFGFFSNIVLLGWTVFSVVFFSFPPVLPVTKDNMNYVCVVIVGYTAYSILYWKYKGKKEFHALEESENEQAEYSNNFDTIEDSREFSVAASDVELENEHVPWGKK</sequence>
<feature type="chain" id="PRO_0000054155" description="Choline transporter">
    <location>
        <begin position="1"/>
        <end position="563"/>
    </location>
</feature>
<feature type="topological domain" description="Extracellular" evidence="1">
    <location>
        <begin position="1"/>
        <end position="57"/>
    </location>
</feature>
<feature type="transmembrane region" description="Helical" evidence="1">
    <location>
        <begin position="58"/>
        <end position="78"/>
    </location>
</feature>
<feature type="topological domain" description="Cytoplasmic" evidence="1">
    <location>
        <begin position="79"/>
        <end position="87"/>
    </location>
</feature>
<feature type="transmembrane region" description="Helical" evidence="1">
    <location>
        <begin position="88"/>
        <end position="108"/>
    </location>
</feature>
<feature type="topological domain" description="Extracellular" evidence="1">
    <location>
        <begin position="109"/>
        <end position="182"/>
    </location>
</feature>
<feature type="transmembrane region" description="Helical" evidence="1">
    <location>
        <begin position="183"/>
        <end position="203"/>
    </location>
</feature>
<feature type="topological domain" description="Cytoplasmic" evidence="1">
    <location>
        <begin position="204"/>
        <end position="205"/>
    </location>
</feature>
<feature type="transmembrane region" description="Helical" evidence="1">
    <location>
        <begin position="206"/>
        <end position="226"/>
    </location>
</feature>
<feature type="topological domain" description="Extracellular" evidence="1">
    <location>
        <begin position="227"/>
        <end position="255"/>
    </location>
</feature>
<feature type="transmembrane region" description="Helical" evidence="1">
    <location>
        <begin position="256"/>
        <end position="276"/>
    </location>
</feature>
<feature type="topological domain" description="Cytoplasmic" evidence="1">
    <location>
        <begin position="277"/>
        <end position="293"/>
    </location>
</feature>
<feature type="transmembrane region" description="Helical" evidence="1">
    <location>
        <begin position="294"/>
        <end position="314"/>
    </location>
</feature>
<feature type="topological domain" description="Extracellular" evidence="1">
    <location>
        <begin position="315"/>
        <end position="342"/>
    </location>
</feature>
<feature type="transmembrane region" description="Helical" evidence="1">
    <location>
        <begin position="343"/>
        <end position="363"/>
    </location>
</feature>
<feature type="topological domain" description="Cytoplasmic" evidence="1">
    <location>
        <begin position="364"/>
        <end position="398"/>
    </location>
</feature>
<feature type="transmembrane region" description="Helical" evidence="1">
    <location>
        <begin position="399"/>
        <end position="417"/>
    </location>
</feature>
<feature type="topological domain" description="Extracellular" evidence="1">
    <location>
        <begin position="418"/>
        <end position="426"/>
    </location>
</feature>
<feature type="transmembrane region" description="Helical" evidence="1">
    <location>
        <begin position="427"/>
        <end position="445"/>
    </location>
</feature>
<feature type="topological domain" description="Cytoplasmic" evidence="1">
    <location>
        <begin position="446"/>
        <end position="465"/>
    </location>
</feature>
<feature type="transmembrane region" description="Helical" evidence="1">
    <location>
        <begin position="466"/>
        <end position="486"/>
    </location>
</feature>
<feature type="topological domain" description="Extracellular" evidence="1">
    <location>
        <begin position="487"/>
        <end position="491"/>
    </location>
</feature>
<feature type="transmembrane region" description="Helical" evidence="1">
    <location>
        <begin position="492"/>
        <end position="512"/>
    </location>
</feature>
<feature type="topological domain" description="Cytoplasmic" evidence="1">
    <location>
        <begin position="513"/>
        <end position="563"/>
    </location>
</feature>
<feature type="region of interest" description="Disordered" evidence="2">
    <location>
        <begin position="1"/>
        <end position="25"/>
    </location>
</feature>
<feature type="modified residue" description="Phosphoserine" evidence="5">
    <location>
        <position position="22"/>
    </location>
</feature>
<feature type="modified residue" description="Phosphoserine" evidence="5">
    <location>
        <position position="42"/>
    </location>
</feature>
<feature type="glycosylation site" description="N-linked (GlcNAc...) asparagine" evidence="1">
    <location>
        <position position="7"/>
    </location>
</feature>
<feature type="glycosylation site" description="N-linked (GlcNAc...) asparagine" evidence="1">
    <location>
        <position position="20"/>
    </location>
</feature>
<feature type="glycosylation site" description="N-linked (GlcNAc...) asparagine" evidence="1">
    <location>
        <position position="248"/>
    </location>
</feature>
<feature type="glycosylation site" description="N-linked (GlcNAc...) asparagine" evidence="1">
    <location>
        <position position="341"/>
    </location>
</feature>
<comment type="function">
    <text evidence="3">Sole choline transporter in yeast (PubMed:3514579). Also transports ethanolamine (PubMed:3514579).</text>
</comment>
<comment type="catalytic activity">
    <reaction evidence="3">
        <text>choline(out) = choline(in)</text>
        <dbReference type="Rhea" id="RHEA:32751"/>
        <dbReference type="ChEBI" id="CHEBI:15354"/>
    </reaction>
</comment>
<comment type="catalytic activity">
    <reaction evidence="3">
        <text>ethanolamine(in) = ethanolamine(out)</text>
        <dbReference type="Rhea" id="RHEA:32747"/>
        <dbReference type="ChEBI" id="CHEBI:57603"/>
    </reaction>
</comment>
<comment type="subcellular location">
    <subcellularLocation>
        <location>Membrane</location>
        <topology>Multi-pass membrane protein</topology>
    </subcellularLocation>
</comment>
<comment type="miscellaneous">
    <text>Inhibition of activity by intracellular choline.</text>
</comment>
<comment type="similarity">
    <text evidence="4">Belongs to the amino acid-polyamine-organocation (APC) superfamily. Amino acid/choline transporter (ACT) (TC 2.A.3.4) family.</text>
</comment>
<evidence type="ECO:0000255" key="1"/>
<evidence type="ECO:0000256" key="2">
    <source>
        <dbReference type="SAM" id="MobiDB-lite"/>
    </source>
</evidence>
<evidence type="ECO:0000269" key="3">
    <source>
    </source>
</evidence>
<evidence type="ECO:0000305" key="4"/>
<evidence type="ECO:0007744" key="5">
    <source>
    </source>
</evidence>
<reference key="1">
    <citation type="journal article" date="1990" name="J. Biol. Chem.">
        <title>Primary structure of the yeast choline transport gene and regulation of its expression.</title>
        <authorList>
            <person name="Nikawa J."/>
            <person name="Hosaka K."/>
            <person name="Tsukagoshi Y."/>
            <person name="Yamashita S."/>
        </authorList>
    </citation>
    <scope>NUCLEOTIDE SEQUENCE [GENOMIC DNA]</scope>
    <source>
        <strain>ATCC 26787 / X2180-1B</strain>
    </source>
</reference>
<reference key="2">
    <citation type="journal article" date="1997" name="Yeast">
        <title>Sequence analysis of 203 kilobases from Saccharomyces cerevisiae chromosome VII.</title>
        <authorList>
            <person name="Rieger M."/>
            <person name="Brueckner M."/>
            <person name="Schaefer M."/>
            <person name="Mueller-Auer S."/>
        </authorList>
    </citation>
    <scope>NUCLEOTIDE SEQUENCE [GENOMIC DNA]</scope>
    <source>
        <strain>ATCC 204508 / S288c</strain>
    </source>
</reference>
<reference key="3">
    <citation type="journal article" date="1997" name="Nature">
        <title>The nucleotide sequence of Saccharomyces cerevisiae chromosome VII.</title>
        <authorList>
            <person name="Tettelin H."/>
            <person name="Agostoni-Carbone M.L."/>
            <person name="Albermann K."/>
            <person name="Albers M."/>
            <person name="Arroyo J."/>
            <person name="Backes U."/>
            <person name="Barreiros T."/>
            <person name="Bertani I."/>
            <person name="Bjourson A.J."/>
            <person name="Brueckner M."/>
            <person name="Bruschi C.V."/>
            <person name="Carignani G."/>
            <person name="Castagnoli L."/>
            <person name="Cerdan E."/>
            <person name="Clemente M.L."/>
            <person name="Coblenz A."/>
            <person name="Coglievina M."/>
            <person name="Coissac E."/>
            <person name="Defoor E."/>
            <person name="Del Bino S."/>
            <person name="Delius H."/>
            <person name="Delneri D."/>
            <person name="de Wergifosse P."/>
            <person name="Dujon B."/>
            <person name="Durand P."/>
            <person name="Entian K.-D."/>
            <person name="Eraso P."/>
            <person name="Escribano V."/>
            <person name="Fabiani L."/>
            <person name="Fartmann B."/>
            <person name="Feroli F."/>
            <person name="Feuermann M."/>
            <person name="Frontali L."/>
            <person name="Garcia-Gonzalez M."/>
            <person name="Garcia-Saez M.I."/>
            <person name="Goffeau A."/>
            <person name="Guerreiro P."/>
            <person name="Hani J."/>
            <person name="Hansen M."/>
            <person name="Hebling U."/>
            <person name="Hernandez K."/>
            <person name="Heumann K."/>
            <person name="Hilger F."/>
            <person name="Hofmann B."/>
            <person name="Indge K.J."/>
            <person name="James C.M."/>
            <person name="Klima R."/>
            <person name="Koetter P."/>
            <person name="Kramer B."/>
            <person name="Kramer W."/>
            <person name="Lauquin G."/>
            <person name="Leuther H."/>
            <person name="Louis E.J."/>
            <person name="Maillier E."/>
            <person name="Marconi A."/>
            <person name="Martegani E."/>
            <person name="Mazon M.J."/>
            <person name="Mazzoni C."/>
            <person name="McReynolds A.D.K."/>
            <person name="Melchioretto P."/>
            <person name="Mewes H.-W."/>
            <person name="Minenkova O."/>
            <person name="Mueller-Auer S."/>
            <person name="Nawrocki A."/>
            <person name="Netter P."/>
            <person name="Neu R."/>
            <person name="Nombela C."/>
            <person name="Oliver S.G."/>
            <person name="Panzeri L."/>
            <person name="Paoluzi S."/>
            <person name="Plevani P."/>
            <person name="Portetelle D."/>
            <person name="Portillo F."/>
            <person name="Potier S."/>
            <person name="Purnelle B."/>
            <person name="Rieger M."/>
            <person name="Riles L."/>
            <person name="Rinaldi T."/>
            <person name="Robben J."/>
            <person name="Rodrigues-Pousada C."/>
            <person name="Rodriguez-Belmonte E."/>
            <person name="Rodriguez-Torres A.M."/>
            <person name="Rose M."/>
            <person name="Ruzzi M."/>
            <person name="Saliola M."/>
            <person name="Sanchez-Perez M."/>
            <person name="Schaefer B."/>
            <person name="Schaefer M."/>
            <person name="Scharfe M."/>
            <person name="Schmidheini T."/>
            <person name="Schreer A."/>
            <person name="Skala J."/>
            <person name="Souciet J.-L."/>
            <person name="Steensma H.Y."/>
            <person name="Talla E."/>
            <person name="Thierry A."/>
            <person name="Vandenbol M."/>
            <person name="van der Aart Q.J.M."/>
            <person name="Van Dyck L."/>
            <person name="Vanoni M."/>
            <person name="Verhasselt P."/>
            <person name="Voet M."/>
            <person name="Volckaert G."/>
            <person name="Wambutt R."/>
            <person name="Watson M.D."/>
            <person name="Weber N."/>
            <person name="Wedler E."/>
            <person name="Wedler H."/>
            <person name="Wipfli P."/>
            <person name="Wolf K."/>
            <person name="Wright L.F."/>
            <person name="Zaccaria P."/>
            <person name="Zimmermann M."/>
            <person name="Zollner A."/>
            <person name="Kleine K."/>
        </authorList>
    </citation>
    <scope>NUCLEOTIDE SEQUENCE [LARGE SCALE GENOMIC DNA]</scope>
    <source>
        <strain>ATCC 204508 / S288c</strain>
    </source>
</reference>
<reference key="4">
    <citation type="journal article" date="2014" name="G3 (Bethesda)">
        <title>The reference genome sequence of Saccharomyces cerevisiae: Then and now.</title>
        <authorList>
            <person name="Engel S.R."/>
            <person name="Dietrich F.S."/>
            <person name="Fisk D.G."/>
            <person name="Binkley G."/>
            <person name="Balakrishnan R."/>
            <person name="Costanzo M.C."/>
            <person name="Dwight S.S."/>
            <person name="Hitz B.C."/>
            <person name="Karra K."/>
            <person name="Nash R.S."/>
            <person name="Weng S."/>
            <person name="Wong E.D."/>
            <person name="Lloyd P."/>
            <person name="Skrzypek M.S."/>
            <person name="Miyasato S.R."/>
            <person name="Simison M."/>
            <person name="Cherry J.M."/>
        </authorList>
    </citation>
    <scope>GENOME REANNOTATION</scope>
    <source>
        <strain>ATCC 204508 / S288c</strain>
    </source>
</reference>
<reference key="5">
    <citation type="journal article" date="2007" name="Genome Res.">
        <title>Approaching a complete repository of sequence-verified protein-encoding clones for Saccharomyces cerevisiae.</title>
        <authorList>
            <person name="Hu Y."/>
            <person name="Rolfs A."/>
            <person name="Bhullar B."/>
            <person name="Murthy T.V.S."/>
            <person name="Zhu C."/>
            <person name="Berger M.F."/>
            <person name="Camargo A.A."/>
            <person name="Kelley F."/>
            <person name="McCarron S."/>
            <person name="Jepson D."/>
            <person name="Richardson A."/>
            <person name="Raphael J."/>
            <person name="Moreira D."/>
            <person name="Taycher E."/>
            <person name="Zuo D."/>
            <person name="Mohr S."/>
            <person name="Kane M.F."/>
            <person name="Williamson J."/>
            <person name="Simpson A.J.G."/>
            <person name="Bulyk M.L."/>
            <person name="Harlow E."/>
            <person name="Marsischky G."/>
            <person name="Kolodner R.D."/>
            <person name="LaBaer J."/>
        </authorList>
    </citation>
    <scope>NUCLEOTIDE SEQUENCE [GENOMIC DNA]</scope>
    <source>
        <strain>ATCC 204508 / S288c</strain>
    </source>
</reference>
<reference key="6">
    <citation type="journal article" date="2006" name="Proc. Natl. Acad. Sci. U.S.A.">
        <title>A global topology map of the Saccharomyces cerevisiae membrane proteome.</title>
        <authorList>
            <person name="Kim H."/>
            <person name="Melen K."/>
            <person name="Oesterberg M."/>
            <person name="von Heijne G."/>
        </authorList>
    </citation>
    <scope>TOPOLOGY [LARGE SCALE ANALYSIS]</scope>
    <source>
        <strain>ATCC 208353 / W303-1A</strain>
    </source>
</reference>
<reference key="7">
    <citation type="journal article" date="2009" name="Science">
        <title>Global analysis of Cdk1 substrate phosphorylation sites provides insights into evolution.</title>
        <authorList>
            <person name="Holt L.J."/>
            <person name="Tuch B.B."/>
            <person name="Villen J."/>
            <person name="Johnson A.D."/>
            <person name="Gygi S.P."/>
            <person name="Morgan D.O."/>
        </authorList>
    </citation>
    <scope>PHOSPHORYLATION [LARGE SCALE ANALYSIS] AT SER-22 AND SER-42</scope>
    <scope>IDENTIFICATION BY MASS SPECTROMETRY [LARGE SCALE ANALYSIS]</scope>
</reference>
<reference key="8">
    <citation type="journal article" date="1986" name="J. Bacteriol.">
        <title>Cloning of a gene encoding choline transport in Saccharomyces cerevisiae.</title>
        <authorList>
            <person name="Nikawa J."/>
            <person name="Tsukagoshi Y."/>
            <person name="Yamashita S."/>
        </authorList>
    </citation>
    <scope>FUNCTION</scope>
    <scope>TRANSPORTER ACTIVITY</scope>
</reference>
<dbReference type="EMBL" id="J05603">
    <property type="protein sequence ID" value="AAA34537.1"/>
    <property type="molecule type" value="Genomic_DNA"/>
</dbReference>
<dbReference type="EMBL" id="Z72599">
    <property type="protein sequence ID" value="CAA96782.1"/>
    <property type="molecule type" value="Genomic_DNA"/>
</dbReference>
<dbReference type="EMBL" id="AY723806">
    <property type="protein sequence ID" value="AAU09723.1"/>
    <property type="molecule type" value="Genomic_DNA"/>
</dbReference>
<dbReference type="EMBL" id="BK006941">
    <property type="protein sequence ID" value="DAA08028.1"/>
    <property type="molecule type" value="Genomic_DNA"/>
</dbReference>
<dbReference type="PIR" id="S11175">
    <property type="entry name" value="S11175"/>
</dbReference>
<dbReference type="RefSeq" id="NP_011438.1">
    <property type="nucleotide sequence ID" value="NM_001180942.1"/>
</dbReference>
<dbReference type="SMR" id="P19807"/>
<dbReference type="BioGRID" id="33173">
    <property type="interactions" value="127"/>
</dbReference>
<dbReference type="DIP" id="DIP-7965N"/>
<dbReference type="FunCoup" id="P19807">
    <property type="interactions" value="190"/>
</dbReference>
<dbReference type="IntAct" id="P19807">
    <property type="interactions" value="61"/>
</dbReference>
<dbReference type="MINT" id="P19807"/>
<dbReference type="STRING" id="4932.YGL077C"/>
<dbReference type="TCDB" id="2.A.3.4.1">
    <property type="family name" value="the amino acid-polyamine-organocation (apc) family"/>
</dbReference>
<dbReference type="GlyCosmos" id="P19807">
    <property type="glycosylation" value="4 sites, No reported glycans"/>
</dbReference>
<dbReference type="GlyGen" id="P19807">
    <property type="glycosylation" value="4 sites"/>
</dbReference>
<dbReference type="iPTMnet" id="P19807"/>
<dbReference type="PaxDb" id="4932-YGL077C"/>
<dbReference type="PeptideAtlas" id="P19807"/>
<dbReference type="EnsemblFungi" id="YGL077C_mRNA">
    <property type="protein sequence ID" value="YGL077C"/>
    <property type="gene ID" value="YGL077C"/>
</dbReference>
<dbReference type="GeneID" id="852803"/>
<dbReference type="KEGG" id="sce:YGL077C"/>
<dbReference type="AGR" id="SGD:S000003045"/>
<dbReference type="SGD" id="S000003045">
    <property type="gene designation" value="HNM1"/>
</dbReference>
<dbReference type="VEuPathDB" id="FungiDB:YGL077C"/>
<dbReference type="eggNOG" id="KOG1289">
    <property type="taxonomic scope" value="Eukaryota"/>
</dbReference>
<dbReference type="HOGENOM" id="CLU_004495_2_4_1"/>
<dbReference type="InParanoid" id="P19807"/>
<dbReference type="OMA" id="GIPWIAF"/>
<dbReference type="OrthoDB" id="2417308at2759"/>
<dbReference type="BioCyc" id="YEAST:G3O-30578-MONOMER"/>
<dbReference type="BioGRID-ORCS" id="852803">
    <property type="hits" value="7 hits in 10 CRISPR screens"/>
</dbReference>
<dbReference type="PRO" id="PR:P19807"/>
<dbReference type="Proteomes" id="UP000002311">
    <property type="component" value="Chromosome VII"/>
</dbReference>
<dbReference type="RNAct" id="P19807">
    <property type="molecule type" value="protein"/>
</dbReference>
<dbReference type="GO" id="GO:0071944">
    <property type="term" value="C:cell periphery"/>
    <property type="evidence" value="ECO:0007005"/>
    <property type="project" value="SGD"/>
</dbReference>
<dbReference type="GO" id="GO:0005783">
    <property type="term" value="C:endoplasmic reticulum"/>
    <property type="evidence" value="ECO:0007005"/>
    <property type="project" value="SGD"/>
</dbReference>
<dbReference type="GO" id="GO:0005886">
    <property type="term" value="C:plasma membrane"/>
    <property type="evidence" value="ECO:0000314"/>
    <property type="project" value="SGD"/>
</dbReference>
<dbReference type="GO" id="GO:1901235">
    <property type="term" value="F:(R)-carnitine transmembrane transporter activity"/>
    <property type="evidence" value="ECO:0000315"/>
    <property type="project" value="SGD"/>
</dbReference>
<dbReference type="GO" id="GO:0015220">
    <property type="term" value="F:choline transmembrane transporter activity"/>
    <property type="evidence" value="ECO:0000315"/>
    <property type="project" value="SGD"/>
</dbReference>
<dbReference type="GO" id="GO:0034228">
    <property type="term" value="F:ethanolamine transmembrane transporter activity"/>
    <property type="evidence" value="ECO:0000315"/>
    <property type="project" value="SGD"/>
</dbReference>
<dbReference type="GO" id="GO:0015185">
    <property type="term" value="F:gamma-aminobutyric acid transmembrane transporter activity"/>
    <property type="evidence" value="ECO:0000318"/>
    <property type="project" value="GO_Central"/>
</dbReference>
<dbReference type="GO" id="GO:1900749">
    <property type="term" value="P:(R)-carnitine transport"/>
    <property type="evidence" value="ECO:0000315"/>
    <property type="project" value="SGD"/>
</dbReference>
<dbReference type="GO" id="GO:0015871">
    <property type="term" value="P:choline transport"/>
    <property type="evidence" value="ECO:0000315"/>
    <property type="project" value="SGD"/>
</dbReference>
<dbReference type="GO" id="GO:0034229">
    <property type="term" value="P:ethanolamine transport"/>
    <property type="evidence" value="ECO:0000315"/>
    <property type="project" value="SGD"/>
</dbReference>
<dbReference type="GO" id="GO:0015812">
    <property type="term" value="P:gamma-aminobutyric acid transport"/>
    <property type="evidence" value="ECO:0000318"/>
    <property type="project" value="GO_Central"/>
</dbReference>
<dbReference type="GO" id="GO:0031460">
    <property type="term" value="P:glycine betaine transport"/>
    <property type="evidence" value="ECO:0000315"/>
    <property type="project" value="SGD"/>
</dbReference>
<dbReference type="FunFam" id="1.20.1740.10:FF:000046">
    <property type="entry name" value="Amino-acid permease, putative"/>
    <property type="match status" value="1"/>
</dbReference>
<dbReference type="Gene3D" id="1.20.1740.10">
    <property type="entry name" value="Amino acid/polyamine transporter I"/>
    <property type="match status" value="1"/>
</dbReference>
<dbReference type="InterPro" id="IPR002293">
    <property type="entry name" value="AA/rel_permease1"/>
</dbReference>
<dbReference type="InterPro" id="IPR004756">
    <property type="entry name" value="AA_permease"/>
</dbReference>
<dbReference type="InterPro" id="IPR004840">
    <property type="entry name" value="Amino_acid_permease_CS"/>
</dbReference>
<dbReference type="NCBIfam" id="TIGR00907">
    <property type="entry name" value="2A0304"/>
    <property type="match status" value="1"/>
</dbReference>
<dbReference type="PANTHER" id="PTHR45649">
    <property type="entry name" value="AMINO-ACID PERMEASE BAT1"/>
    <property type="match status" value="1"/>
</dbReference>
<dbReference type="PANTHER" id="PTHR45649:SF7">
    <property type="entry name" value="CHOLINE TRANSPORT PROTEIN"/>
    <property type="match status" value="1"/>
</dbReference>
<dbReference type="Pfam" id="PF13520">
    <property type="entry name" value="AA_permease_2"/>
    <property type="match status" value="1"/>
</dbReference>
<dbReference type="PIRSF" id="PIRSF006060">
    <property type="entry name" value="AA_transporter"/>
    <property type="match status" value="1"/>
</dbReference>
<dbReference type="PROSITE" id="PS00218">
    <property type="entry name" value="AMINO_ACID_PERMEASE_1"/>
    <property type="match status" value="1"/>
</dbReference>
<proteinExistence type="evidence at protein level"/>
<name>HNM1_YEAST</name>
<accession>P19807</accession>
<accession>D6VU67</accession>
<gene>
    <name type="primary">HNM1</name>
    <name type="synonym">CTR</name>
    <name type="synonym">CTR1</name>
    <name type="ordered locus">YGL077C</name>
</gene>
<keyword id="KW-0029">Amino-acid transport</keyword>
<keyword id="KW-0325">Glycoprotein</keyword>
<keyword id="KW-0472">Membrane</keyword>
<keyword id="KW-0597">Phosphoprotein</keyword>
<keyword id="KW-1185">Reference proteome</keyword>
<keyword id="KW-0812">Transmembrane</keyword>
<keyword id="KW-1133">Transmembrane helix</keyword>
<keyword id="KW-0813">Transport</keyword>